<evidence type="ECO:0000269" key="1">
    <source>
    </source>
</evidence>
<evidence type="ECO:0000303" key="2">
    <source>
    </source>
</evidence>
<evidence type="ECO:0000305" key="3"/>
<protein>
    <recommendedName>
        <fullName evidence="2">4'-phosphopantetheinyl transferase B, mitochondrial</fullName>
        <shortName evidence="2">PPTase B</shortName>
        <ecNumber evidence="1">2.7.8.7</ecNumber>
    </recommendedName>
    <alternativeName>
        <fullName evidence="2">Acyl-carrier-protein synthase pptB</fullName>
    </alternativeName>
    <alternativeName>
        <fullName evidence="2">Phosphopantetheine:protein transferase pptB</fullName>
    </alternativeName>
</protein>
<accession>Q4W9R0</accession>
<accession>E9QQI6</accession>
<accession>Q4FCS6</accession>
<proteinExistence type="evidence at protein level"/>
<name>PPTB_ASPFU</name>
<organism>
    <name type="scientific">Aspergillus fumigatus (strain ATCC MYA-4609 / CBS 101355 / FGSC A1100 / Af293)</name>
    <name type="common">Neosartorya fumigata</name>
    <dbReference type="NCBI Taxonomy" id="330879"/>
    <lineage>
        <taxon>Eukaryota</taxon>
        <taxon>Fungi</taxon>
        <taxon>Dikarya</taxon>
        <taxon>Ascomycota</taxon>
        <taxon>Pezizomycotina</taxon>
        <taxon>Eurotiomycetes</taxon>
        <taxon>Eurotiomycetidae</taxon>
        <taxon>Eurotiales</taxon>
        <taxon>Aspergillaceae</taxon>
        <taxon>Aspergillus</taxon>
        <taxon>Aspergillus subgen. Fumigati</taxon>
    </lineage>
</organism>
<keyword id="KW-0496">Mitochondrion</keyword>
<keyword id="KW-1185">Reference proteome</keyword>
<keyword id="KW-0808">Transferase</keyword>
<gene>
    <name evidence="2" type="primary">pptB</name>
    <name type="ORF">AFUA_4G04040</name>
</gene>
<dbReference type="EC" id="2.7.8.7" evidence="1"/>
<dbReference type="EMBL" id="DQ092863">
    <property type="protein sequence ID" value="AAY99390.1"/>
    <property type="molecule type" value="Genomic_DNA"/>
</dbReference>
<dbReference type="EMBL" id="AAHF01000016">
    <property type="protein sequence ID" value="EAL84553.1"/>
    <property type="molecule type" value="Genomic_DNA"/>
</dbReference>
<dbReference type="RefSeq" id="XP_746591.1">
    <property type="nucleotide sequence ID" value="XM_741498.1"/>
</dbReference>
<dbReference type="SMR" id="Q4W9R0"/>
<dbReference type="STRING" id="330879.Q4W9R0"/>
<dbReference type="EnsemblFungi" id="EAL84553">
    <property type="protein sequence ID" value="EAL84553"/>
    <property type="gene ID" value="AFUA_4G04040"/>
</dbReference>
<dbReference type="GeneID" id="3503902"/>
<dbReference type="KEGG" id="afm:AFUA_4G04040"/>
<dbReference type="VEuPathDB" id="FungiDB:Afu4g04040"/>
<dbReference type="eggNOG" id="ENOG502SDWS">
    <property type="taxonomic scope" value="Eukaryota"/>
</dbReference>
<dbReference type="HOGENOM" id="CLU_089696_4_2_1"/>
<dbReference type="InParanoid" id="Q4W9R0"/>
<dbReference type="OMA" id="FTRRILC"/>
<dbReference type="OrthoDB" id="15433at2759"/>
<dbReference type="Proteomes" id="UP000002530">
    <property type="component" value="Chromosome 4"/>
</dbReference>
<dbReference type="GO" id="GO:0005739">
    <property type="term" value="C:mitochondrion"/>
    <property type="evidence" value="ECO:0000314"/>
    <property type="project" value="AspGD"/>
</dbReference>
<dbReference type="GO" id="GO:0008897">
    <property type="term" value="F:holo-[acyl-carrier-protein] synthase activity"/>
    <property type="evidence" value="ECO:0000314"/>
    <property type="project" value="AspGD"/>
</dbReference>
<dbReference type="GO" id="GO:0000287">
    <property type="term" value="F:magnesium ion binding"/>
    <property type="evidence" value="ECO:0007669"/>
    <property type="project" value="InterPro"/>
</dbReference>
<dbReference type="GO" id="GO:0006633">
    <property type="term" value="P:fatty acid biosynthetic process"/>
    <property type="evidence" value="ECO:0007669"/>
    <property type="project" value="InterPro"/>
</dbReference>
<dbReference type="FunFam" id="3.90.470.20:FF:000045">
    <property type="entry name" value="Phosphopantetheinyl transferase PptB"/>
    <property type="match status" value="1"/>
</dbReference>
<dbReference type="Gene3D" id="3.90.470.20">
    <property type="entry name" value="4'-phosphopantetheinyl transferase domain"/>
    <property type="match status" value="1"/>
</dbReference>
<dbReference type="HAMAP" id="MF_00101">
    <property type="entry name" value="AcpS"/>
    <property type="match status" value="1"/>
</dbReference>
<dbReference type="InterPro" id="IPR008278">
    <property type="entry name" value="4-PPantetheinyl_Trfase_dom"/>
</dbReference>
<dbReference type="InterPro" id="IPR037143">
    <property type="entry name" value="4-PPantetheinyl_Trfase_dom_sf"/>
</dbReference>
<dbReference type="InterPro" id="IPR002582">
    <property type="entry name" value="ACPS"/>
</dbReference>
<dbReference type="Pfam" id="PF01648">
    <property type="entry name" value="ACPS"/>
    <property type="match status" value="1"/>
</dbReference>
<dbReference type="SUPFAM" id="SSF56214">
    <property type="entry name" value="4'-phosphopantetheinyl transferase"/>
    <property type="match status" value="1"/>
</dbReference>
<comment type="function">
    <text evidence="1">Acyl-carrier-protein synthase transfers the 4'-phosphopantetheine moiety from coenzyme A to a Ser of an acyl-carrier-protein (PubMed:21195204). The 4'-phosphopantetheine (4'-PPT) portion of CoA provides the essential prosthetic group for a number of carrier proteins and multi-domain enzymes, priming them for the acceptance of acyl building blocks in fatty acid synthesis and many aspects of secondary metabolism mediated by polyketide synthases (PKSs) and non-ribosomal peptide synthetases (NRPSs) (PubMed:21195204). PptB is specific for the mitochondrial acyl carrier protein acpA (PubMed:21195204).</text>
</comment>
<comment type="catalytic activity">
    <reaction evidence="1">
        <text>apo-[ACP] + CoA = holo-[ACP] + adenosine 3',5'-bisphosphate + H(+)</text>
        <dbReference type="Rhea" id="RHEA:12068"/>
        <dbReference type="Rhea" id="RHEA-COMP:9685"/>
        <dbReference type="Rhea" id="RHEA-COMP:9690"/>
        <dbReference type="ChEBI" id="CHEBI:15378"/>
        <dbReference type="ChEBI" id="CHEBI:29999"/>
        <dbReference type="ChEBI" id="CHEBI:57287"/>
        <dbReference type="ChEBI" id="CHEBI:58343"/>
        <dbReference type="ChEBI" id="CHEBI:64479"/>
        <dbReference type="EC" id="2.7.8.7"/>
    </reaction>
</comment>
<comment type="subcellular location">
    <subcellularLocation>
        <location evidence="1">Mitochondrion</location>
    </subcellularLocation>
</comment>
<comment type="disruption phenotype">
    <text evidence="1">Essential for viability (PubMed:21195204). Leads to swollen spores in heterokaryons with a low germination rate and arrest at this stage (PubMed:21195204).</text>
</comment>
<comment type="similarity">
    <text evidence="3">Belongs to the P-Pant transferase superfamily.</text>
</comment>
<reference key="1">
    <citation type="journal article" date="2011" name="Fungal Genet. Biol.">
        <title>Functional analysis of a mitochondrial phosphopantetheinyl transferase (PPTase) gene pptB in Aspergillus fumigatus.</title>
        <authorList>
            <person name="Allen G."/>
            <person name="Bromley M."/>
            <person name="Kaye S.J."/>
            <person name="Keszenman-Pereyra D."/>
            <person name="Zucchi T.D."/>
            <person name="Price J."/>
            <person name="Birch M."/>
            <person name="Oliver J.D."/>
            <person name="Turner G."/>
        </authorList>
    </citation>
    <scope>NUCLEOTIDE SEQUENCE [GENOMIC DNA]</scope>
    <scope>FUNCTION</scope>
    <scope>DISRUPTION PHENOTYPE</scope>
    <scope>SUBCELLULAR LOCATION</scope>
    <scope>CATALYTIC ACTIVITY</scope>
</reference>
<reference key="2">
    <citation type="journal article" date="2005" name="Nature">
        <title>Genomic sequence of the pathogenic and allergenic filamentous fungus Aspergillus fumigatus.</title>
        <authorList>
            <person name="Nierman W.C."/>
            <person name="Pain A."/>
            <person name="Anderson M.J."/>
            <person name="Wortman J.R."/>
            <person name="Kim H.S."/>
            <person name="Arroyo J."/>
            <person name="Berriman M."/>
            <person name="Abe K."/>
            <person name="Archer D.B."/>
            <person name="Bermejo C."/>
            <person name="Bennett J.W."/>
            <person name="Bowyer P."/>
            <person name="Chen D."/>
            <person name="Collins M."/>
            <person name="Coulsen R."/>
            <person name="Davies R."/>
            <person name="Dyer P.S."/>
            <person name="Farman M.L."/>
            <person name="Fedorova N."/>
            <person name="Fedorova N.D."/>
            <person name="Feldblyum T.V."/>
            <person name="Fischer R."/>
            <person name="Fosker N."/>
            <person name="Fraser A."/>
            <person name="Garcia J.L."/>
            <person name="Garcia M.J."/>
            <person name="Goble A."/>
            <person name="Goldman G.H."/>
            <person name="Gomi K."/>
            <person name="Griffith-Jones S."/>
            <person name="Gwilliam R."/>
            <person name="Haas B.J."/>
            <person name="Haas H."/>
            <person name="Harris D.E."/>
            <person name="Horiuchi H."/>
            <person name="Huang J."/>
            <person name="Humphray S."/>
            <person name="Jimenez J."/>
            <person name="Keller N."/>
            <person name="Khouri H."/>
            <person name="Kitamoto K."/>
            <person name="Kobayashi T."/>
            <person name="Konzack S."/>
            <person name="Kulkarni R."/>
            <person name="Kumagai T."/>
            <person name="Lafton A."/>
            <person name="Latge J.-P."/>
            <person name="Li W."/>
            <person name="Lord A."/>
            <person name="Lu C."/>
            <person name="Majoros W.H."/>
            <person name="May G.S."/>
            <person name="Miller B.L."/>
            <person name="Mohamoud Y."/>
            <person name="Molina M."/>
            <person name="Monod M."/>
            <person name="Mouyna I."/>
            <person name="Mulligan S."/>
            <person name="Murphy L.D."/>
            <person name="O'Neil S."/>
            <person name="Paulsen I."/>
            <person name="Penalva M.A."/>
            <person name="Pertea M."/>
            <person name="Price C."/>
            <person name="Pritchard B.L."/>
            <person name="Quail M.A."/>
            <person name="Rabbinowitsch E."/>
            <person name="Rawlins N."/>
            <person name="Rajandream M.A."/>
            <person name="Reichard U."/>
            <person name="Renauld H."/>
            <person name="Robson G.D."/>
            <person name="Rodriguez de Cordoba S."/>
            <person name="Rodriguez-Pena J.M."/>
            <person name="Ronning C.M."/>
            <person name="Rutter S."/>
            <person name="Salzberg S.L."/>
            <person name="Sanchez M."/>
            <person name="Sanchez-Ferrero J.C."/>
            <person name="Saunders D."/>
            <person name="Seeger K."/>
            <person name="Squares R."/>
            <person name="Squares S."/>
            <person name="Takeuchi M."/>
            <person name="Tekaia F."/>
            <person name="Turner G."/>
            <person name="Vazquez de Aldana C.R."/>
            <person name="Weidman J."/>
            <person name="White O."/>
            <person name="Woodward J.R."/>
            <person name="Yu J.-H."/>
            <person name="Fraser C.M."/>
            <person name="Galagan J.E."/>
            <person name="Asai K."/>
            <person name="Machida M."/>
            <person name="Hall N."/>
            <person name="Barrell B.G."/>
            <person name="Denning D.W."/>
        </authorList>
    </citation>
    <scope>NUCLEOTIDE SEQUENCE [LARGE SCALE GENOMIC DNA]</scope>
    <source>
        <strain>ATCC MYA-4609 / CBS 101355 / FGSC A1100 / Af293</strain>
    </source>
</reference>
<feature type="chain" id="PRO_0000444448" description="4'-phosphopantetheinyl transferase B, mitochondrial">
    <location>
        <begin position="1"/>
        <end position="153"/>
    </location>
</feature>
<sequence>MKLIPFPYPLNIGTDVVHLPRILRLINRPDYFHRFTRRILHEQEQRDFRTRFSLPPPSSGAEKTGLNPITPDMARWLAGRFAAKEAARKAAPAGASSLGWKDVIVRVGEADKGRPEIVYLDPMGCGETGGGRVGKLSISHDGDYVVATVLAAG</sequence>